<proteinExistence type="inferred from homology"/>
<dbReference type="EC" id="3.5.4.16" evidence="2"/>
<dbReference type="EMBL" id="AE016796">
    <property type="protein sequence ID" value="AAO07492.1"/>
    <property type="molecule type" value="Genomic_DNA"/>
</dbReference>
<dbReference type="RefSeq" id="WP_011081489.1">
    <property type="nucleotide sequence ID" value="NC_004460.2"/>
</dbReference>
<dbReference type="SMR" id="Q8D6I7"/>
<dbReference type="GeneID" id="93897825"/>
<dbReference type="KEGG" id="vvu:VV2_0543"/>
<dbReference type="HOGENOM" id="CLU_049768_3_2_6"/>
<dbReference type="UniPathway" id="UPA00848">
    <property type="reaction ID" value="UER00151"/>
</dbReference>
<dbReference type="Proteomes" id="UP000002275">
    <property type="component" value="Chromosome 2"/>
</dbReference>
<dbReference type="GO" id="GO:0005737">
    <property type="term" value="C:cytoplasm"/>
    <property type="evidence" value="ECO:0007669"/>
    <property type="project" value="TreeGrafter"/>
</dbReference>
<dbReference type="GO" id="GO:0005525">
    <property type="term" value="F:GTP binding"/>
    <property type="evidence" value="ECO:0007669"/>
    <property type="project" value="UniProtKB-KW"/>
</dbReference>
<dbReference type="GO" id="GO:0003934">
    <property type="term" value="F:GTP cyclohydrolase I activity"/>
    <property type="evidence" value="ECO:0007669"/>
    <property type="project" value="UniProtKB-UniRule"/>
</dbReference>
<dbReference type="GO" id="GO:0008270">
    <property type="term" value="F:zinc ion binding"/>
    <property type="evidence" value="ECO:0007669"/>
    <property type="project" value="UniProtKB-UniRule"/>
</dbReference>
<dbReference type="GO" id="GO:0006730">
    <property type="term" value="P:one-carbon metabolic process"/>
    <property type="evidence" value="ECO:0007669"/>
    <property type="project" value="UniProtKB-UniRule"/>
</dbReference>
<dbReference type="GO" id="GO:0006729">
    <property type="term" value="P:tetrahydrobiopterin biosynthetic process"/>
    <property type="evidence" value="ECO:0007669"/>
    <property type="project" value="TreeGrafter"/>
</dbReference>
<dbReference type="GO" id="GO:0046654">
    <property type="term" value="P:tetrahydrofolate biosynthetic process"/>
    <property type="evidence" value="ECO:0007669"/>
    <property type="project" value="UniProtKB-UniRule"/>
</dbReference>
<dbReference type="FunFam" id="3.30.1130.10:FF:000001">
    <property type="entry name" value="GTP cyclohydrolase 1"/>
    <property type="match status" value="1"/>
</dbReference>
<dbReference type="Gene3D" id="1.10.286.10">
    <property type="match status" value="1"/>
</dbReference>
<dbReference type="Gene3D" id="3.30.1130.10">
    <property type="match status" value="1"/>
</dbReference>
<dbReference type="HAMAP" id="MF_00223">
    <property type="entry name" value="FolE"/>
    <property type="match status" value="1"/>
</dbReference>
<dbReference type="InterPro" id="IPR043133">
    <property type="entry name" value="GTP-CH-I_C/QueF"/>
</dbReference>
<dbReference type="InterPro" id="IPR043134">
    <property type="entry name" value="GTP-CH-I_N"/>
</dbReference>
<dbReference type="InterPro" id="IPR001474">
    <property type="entry name" value="GTP_CycHdrlase_I"/>
</dbReference>
<dbReference type="InterPro" id="IPR018234">
    <property type="entry name" value="GTP_CycHdrlase_I_CS"/>
</dbReference>
<dbReference type="InterPro" id="IPR020602">
    <property type="entry name" value="GTP_CycHdrlase_I_dom"/>
</dbReference>
<dbReference type="NCBIfam" id="TIGR00063">
    <property type="entry name" value="folE"/>
    <property type="match status" value="1"/>
</dbReference>
<dbReference type="NCBIfam" id="NF006824">
    <property type="entry name" value="PRK09347.1-1"/>
    <property type="match status" value="1"/>
</dbReference>
<dbReference type="NCBIfam" id="NF006825">
    <property type="entry name" value="PRK09347.1-2"/>
    <property type="match status" value="1"/>
</dbReference>
<dbReference type="NCBIfam" id="NF006826">
    <property type="entry name" value="PRK09347.1-3"/>
    <property type="match status" value="1"/>
</dbReference>
<dbReference type="PANTHER" id="PTHR11109:SF7">
    <property type="entry name" value="GTP CYCLOHYDROLASE 1"/>
    <property type="match status" value="1"/>
</dbReference>
<dbReference type="PANTHER" id="PTHR11109">
    <property type="entry name" value="GTP CYCLOHYDROLASE I"/>
    <property type="match status" value="1"/>
</dbReference>
<dbReference type="Pfam" id="PF01227">
    <property type="entry name" value="GTP_cyclohydroI"/>
    <property type="match status" value="1"/>
</dbReference>
<dbReference type="SUPFAM" id="SSF55620">
    <property type="entry name" value="Tetrahydrobiopterin biosynthesis enzymes-like"/>
    <property type="match status" value="1"/>
</dbReference>
<dbReference type="PROSITE" id="PS00859">
    <property type="entry name" value="GTP_CYCLOHYDROL_1_1"/>
    <property type="match status" value="1"/>
</dbReference>
<dbReference type="PROSITE" id="PS00860">
    <property type="entry name" value="GTP_CYCLOHYDROL_1_2"/>
    <property type="match status" value="1"/>
</dbReference>
<reference key="1">
    <citation type="submission" date="2002-12" db="EMBL/GenBank/DDBJ databases">
        <title>Complete genome sequence of Vibrio vulnificus CMCP6.</title>
        <authorList>
            <person name="Rhee J.H."/>
            <person name="Kim S.Y."/>
            <person name="Chung S.S."/>
            <person name="Kim J.J."/>
            <person name="Moon Y.H."/>
            <person name="Jeong H."/>
            <person name="Choy H.E."/>
        </authorList>
    </citation>
    <scope>NUCLEOTIDE SEQUENCE [LARGE SCALE GENOMIC DNA]</scope>
    <source>
        <strain>CMCP6</strain>
    </source>
</reference>
<name>GCH1_VIBVU</name>
<accession>Q8D6I7</accession>
<keyword id="KW-0342">GTP-binding</keyword>
<keyword id="KW-0378">Hydrolase</keyword>
<keyword id="KW-0479">Metal-binding</keyword>
<keyword id="KW-0547">Nucleotide-binding</keyword>
<keyword id="KW-0554">One-carbon metabolism</keyword>
<keyword id="KW-0862">Zinc</keyword>
<feature type="chain" id="PRO_0000119462" description="GTP cyclohydrolase 1">
    <location>
        <begin position="1"/>
        <end position="217"/>
    </location>
</feature>
<feature type="binding site" evidence="2">
    <location>
        <position position="109"/>
    </location>
    <ligand>
        <name>Zn(2+)</name>
        <dbReference type="ChEBI" id="CHEBI:29105"/>
    </ligand>
</feature>
<feature type="binding site" evidence="2">
    <location>
        <position position="112"/>
    </location>
    <ligand>
        <name>Zn(2+)</name>
        <dbReference type="ChEBI" id="CHEBI:29105"/>
    </ligand>
</feature>
<feature type="binding site" evidence="2">
    <location>
        <position position="180"/>
    </location>
    <ligand>
        <name>Zn(2+)</name>
        <dbReference type="ChEBI" id="CHEBI:29105"/>
    </ligand>
</feature>
<sequence length="217" mass="24503">MSGLSESAQLVKQALEKRGLETPMVPNQFSREEKKEKIEHHMREILSLLELDLTDDSLEETPRRIAKMYVDEVFSGLDYQNFPKITVIENKMNVSEMVRVKEITLTSTCEHHLVTIDGKAAVAYIPRGKIIGLSKINRIVRFFAQRPQVQERMTQQILVALQTLLESDDVAVTIDATHYCVKSRGVMDATSETTTTALGGIFKSNPATRAEFLHGLR</sequence>
<organism>
    <name type="scientific">Vibrio vulnificus (strain CMCP6)</name>
    <dbReference type="NCBI Taxonomy" id="216895"/>
    <lineage>
        <taxon>Bacteria</taxon>
        <taxon>Pseudomonadati</taxon>
        <taxon>Pseudomonadota</taxon>
        <taxon>Gammaproteobacteria</taxon>
        <taxon>Vibrionales</taxon>
        <taxon>Vibrionaceae</taxon>
        <taxon>Vibrio</taxon>
    </lineage>
</organism>
<protein>
    <recommendedName>
        <fullName evidence="2">GTP cyclohydrolase 1</fullName>
        <ecNumber evidence="2">3.5.4.16</ecNumber>
    </recommendedName>
    <alternativeName>
        <fullName evidence="2">GTP cyclohydrolase I</fullName>
        <shortName evidence="2">GTP-CH-I</shortName>
    </alternativeName>
</protein>
<evidence type="ECO:0000250" key="1"/>
<evidence type="ECO:0000255" key="2">
    <source>
        <dbReference type="HAMAP-Rule" id="MF_00223"/>
    </source>
</evidence>
<gene>
    <name evidence="2" type="primary">folE</name>
    <name type="ordered locus">VV2_0543</name>
</gene>
<comment type="catalytic activity">
    <reaction evidence="2">
        <text>GTP + H2O = 7,8-dihydroneopterin 3'-triphosphate + formate + H(+)</text>
        <dbReference type="Rhea" id="RHEA:17473"/>
        <dbReference type="ChEBI" id="CHEBI:15377"/>
        <dbReference type="ChEBI" id="CHEBI:15378"/>
        <dbReference type="ChEBI" id="CHEBI:15740"/>
        <dbReference type="ChEBI" id="CHEBI:37565"/>
        <dbReference type="ChEBI" id="CHEBI:58462"/>
        <dbReference type="EC" id="3.5.4.16"/>
    </reaction>
</comment>
<comment type="pathway">
    <text evidence="2">Cofactor biosynthesis; 7,8-dihydroneopterin triphosphate biosynthesis; 7,8-dihydroneopterin triphosphate from GTP: step 1/1.</text>
</comment>
<comment type="subunit">
    <text evidence="1">Toroid-shaped homodecamer, composed of two pentamers of five dimers.</text>
</comment>
<comment type="similarity">
    <text evidence="2">Belongs to the GTP cyclohydrolase I family.</text>
</comment>